<evidence type="ECO:0000255" key="1">
    <source>
        <dbReference type="HAMAP-Rule" id="MF_00279"/>
    </source>
</evidence>
<evidence type="ECO:0000305" key="2"/>
<organism>
    <name type="scientific">Synechococcus sp. (strain ATCC 27144 / PCC 6301 / SAUG 1402/1)</name>
    <name type="common">Anacystis nidulans</name>
    <dbReference type="NCBI Taxonomy" id="269084"/>
    <lineage>
        <taxon>Bacteria</taxon>
        <taxon>Bacillati</taxon>
        <taxon>Cyanobacteriota</taxon>
        <taxon>Cyanophyceae</taxon>
        <taxon>Synechococcales</taxon>
        <taxon>Synechococcaceae</taxon>
        <taxon>Synechococcus</taxon>
    </lineage>
</organism>
<accession>Q3V812</accession>
<proteinExistence type="inferred from homology"/>
<gene>
    <name evidence="1" type="primary">pdxJ</name>
    <name type="ordered locus">syc0356_c</name>
</gene>
<protein>
    <recommendedName>
        <fullName evidence="1">Pyridoxine 5'-phosphate synthase</fullName>
        <shortName evidence="1">PNP synthase</shortName>
        <ecNumber evidence="1">2.6.99.2</ecNumber>
    </recommendedName>
</protein>
<dbReference type="EC" id="2.6.99.2" evidence="1"/>
<dbReference type="EMBL" id="AP008231">
    <property type="protein sequence ID" value="BAD78546.1"/>
    <property type="status" value="ALT_INIT"/>
    <property type="molecule type" value="Genomic_DNA"/>
</dbReference>
<dbReference type="RefSeq" id="WP_039755983.1">
    <property type="nucleotide sequence ID" value="NZ_CP085785.1"/>
</dbReference>
<dbReference type="SMR" id="Q3V812"/>
<dbReference type="KEGG" id="syc:syc0356_c"/>
<dbReference type="eggNOG" id="COG0854">
    <property type="taxonomic scope" value="Bacteria"/>
</dbReference>
<dbReference type="UniPathway" id="UPA00244">
    <property type="reaction ID" value="UER00313"/>
</dbReference>
<dbReference type="Proteomes" id="UP000001175">
    <property type="component" value="Chromosome"/>
</dbReference>
<dbReference type="GO" id="GO:0005829">
    <property type="term" value="C:cytosol"/>
    <property type="evidence" value="ECO:0007669"/>
    <property type="project" value="TreeGrafter"/>
</dbReference>
<dbReference type="GO" id="GO:0033856">
    <property type="term" value="F:pyridoxine 5'-phosphate synthase activity"/>
    <property type="evidence" value="ECO:0007669"/>
    <property type="project" value="UniProtKB-EC"/>
</dbReference>
<dbReference type="GO" id="GO:0008615">
    <property type="term" value="P:pyridoxine biosynthetic process"/>
    <property type="evidence" value="ECO:0007669"/>
    <property type="project" value="UniProtKB-UniRule"/>
</dbReference>
<dbReference type="CDD" id="cd00003">
    <property type="entry name" value="PNPsynthase"/>
    <property type="match status" value="1"/>
</dbReference>
<dbReference type="Gene3D" id="3.20.20.70">
    <property type="entry name" value="Aldolase class I"/>
    <property type="match status" value="1"/>
</dbReference>
<dbReference type="HAMAP" id="MF_00279">
    <property type="entry name" value="PdxJ"/>
    <property type="match status" value="1"/>
</dbReference>
<dbReference type="InterPro" id="IPR013785">
    <property type="entry name" value="Aldolase_TIM"/>
</dbReference>
<dbReference type="InterPro" id="IPR004569">
    <property type="entry name" value="PyrdxlP_synth_PdxJ"/>
</dbReference>
<dbReference type="InterPro" id="IPR036130">
    <property type="entry name" value="Pyridoxine-5'_phos_synth"/>
</dbReference>
<dbReference type="NCBIfam" id="TIGR00559">
    <property type="entry name" value="pdxJ"/>
    <property type="match status" value="1"/>
</dbReference>
<dbReference type="NCBIfam" id="NF003623">
    <property type="entry name" value="PRK05265.1-1"/>
    <property type="match status" value="1"/>
</dbReference>
<dbReference type="NCBIfam" id="NF003625">
    <property type="entry name" value="PRK05265.1-3"/>
    <property type="match status" value="1"/>
</dbReference>
<dbReference type="NCBIfam" id="NF003627">
    <property type="entry name" value="PRK05265.1-5"/>
    <property type="match status" value="1"/>
</dbReference>
<dbReference type="PANTHER" id="PTHR30456">
    <property type="entry name" value="PYRIDOXINE 5'-PHOSPHATE SYNTHASE"/>
    <property type="match status" value="1"/>
</dbReference>
<dbReference type="PANTHER" id="PTHR30456:SF0">
    <property type="entry name" value="PYRIDOXINE 5'-PHOSPHATE SYNTHASE"/>
    <property type="match status" value="1"/>
</dbReference>
<dbReference type="Pfam" id="PF03740">
    <property type="entry name" value="PdxJ"/>
    <property type="match status" value="1"/>
</dbReference>
<dbReference type="SUPFAM" id="SSF63892">
    <property type="entry name" value="Pyridoxine 5'-phosphate synthase"/>
    <property type="match status" value="1"/>
</dbReference>
<name>PDXJ_SYNP6</name>
<comment type="function">
    <text evidence="1">Catalyzes the complicated ring closure reaction between the two acyclic compounds 1-deoxy-D-xylulose-5-phosphate (DXP) and 3-amino-2-oxopropyl phosphate (1-amino-acetone-3-phosphate or AAP) to form pyridoxine 5'-phosphate (PNP) and inorganic phosphate.</text>
</comment>
<comment type="catalytic activity">
    <reaction evidence="1">
        <text>3-amino-2-oxopropyl phosphate + 1-deoxy-D-xylulose 5-phosphate = pyridoxine 5'-phosphate + phosphate + 2 H2O + H(+)</text>
        <dbReference type="Rhea" id="RHEA:15265"/>
        <dbReference type="ChEBI" id="CHEBI:15377"/>
        <dbReference type="ChEBI" id="CHEBI:15378"/>
        <dbReference type="ChEBI" id="CHEBI:43474"/>
        <dbReference type="ChEBI" id="CHEBI:57279"/>
        <dbReference type="ChEBI" id="CHEBI:57792"/>
        <dbReference type="ChEBI" id="CHEBI:58589"/>
        <dbReference type="EC" id="2.6.99.2"/>
    </reaction>
</comment>
<comment type="pathway">
    <text evidence="1">Cofactor biosynthesis; pyridoxine 5'-phosphate biosynthesis; pyridoxine 5'-phosphate from D-erythrose 4-phosphate: step 5/5.</text>
</comment>
<comment type="subunit">
    <text evidence="1">Homooctamer; tetramer of dimers.</text>
</comment>
<comment type="subcellular location">
    <subcellularLocation>
        <location evidence="1">Cytoplasm</location>
    </subcellularLocation>
</comment>
<comment type="similarity">
    <text evidence="1">Belongs to the PNP synthase family.</text>
</comment>
<comment type="sequence caution" evidence="2">
    <conflict type="erroneous initiation">
        <sequence resource="EMBL-CDS" id="BAD78546"/>
    </conflict>
</comment>
<feature type="chain" id="PRO_0000231849" description="Pyridoxine 5'-phosphate synthase">
    <location>
        <begin position="1"/>
        <end position="240"/>
    </location>
</feature>
<feature type="active site" description="Proton acceptor" evidence="1">
    <location>
        <position position="43"/>
    </location>
</feature>
<feature type="active site" description="Proton acceptor" evidence="1">
    <location>
        <position position="70"/>
    </location>
</feature>
<feature type="active site" description="Proton donor" evidence="1">
    <location>
        <position position="191"/>
    </location>
</feature>
<feature type="binding site" evidence="1">
    <location>
        <position position="7"/>
    </location>
    <ligand>
        <name>3-amino-2-oxopropyl phosphate</name>
        <dbReference type="ChEBI" id="CHEBI:57279"/>
    </ligand>
</feature>
<feature type="binding site" evidence="1">
    <location>
        <begin position="9"/>
        <end position="10"/>
    </location>
    <ligand>
        <name>1-deoxy-D-xylulose 5-phosphate</name>
        <dbReference type="ChEBI" id="CHEBI:57792"/>
    </ligand>
</feature>
<feature type="binding site" evidence="1">
    <location>
        <position position="18"/>
    </location>
    <ligand>
        <name>3-amino-2-oxopropyl phosphate</name>
        <dbReference type="ChEBI" id="CHEBI:57279"/>
    </ligand>
</feature>
<feature type="binding site" evidence="1">
    <location>
        <position position="45"/>
    </location>
    <ligand>
        <name>1-deoxy-D-xylulose 5-phosphate</name>
        <dbReference type="ChEBI" id="CHEBI:57792"/>
    </ligand>
</feature>
<feature type="binding site" evidence="1">
    <location>
        <position position="50"/>
    </location>
    <ligand>
        <name>1-deoxy-D-xylulose 5-phosphate</name>
        <dbReference type="ChEBI" id="CHEBI:57792"/>
    </ligand>
</feature>
<feature type="binding site" evidence="1">
    <location>
        <position position="100"/>
    </location>
    <ligand>
        <name>1-deoxy-D-xylulose 5-phosphate</name>
        <dbReference type="ChEBI" id="CHEBI:57792"/>
    </ligand>
</feature>
<feature type="binding site" evidence="1">
    <location>
        <position position="192"/>
    </location>
    <ligand>
        <name>3-amino-2-oxopropyl phosphate</name>
        <dbReference type="ChEBI" id="CHEBI:57279"/>
    </ligand>
</feature>
<feature type="binding site" evidence="1">
    <location>
        <begin position="213"/>
        <end position="214"/>
    </location>
    <ligand>
        <name>3-amino-2-oxopropyl phosphate</name>
        <dbReference type="ChEBI" id="CHEBI:57279"/>
    </ligand>
</feature>
<feature type="site" description="Transition state stabilizer" evidence="1">
    <location>
        <position position="151"/>
    </location>
</feature>
<keyword id="KW-0963">Cytoplasm</keyword>
<keyword id="KW-0664">Pyridoxine biosynthesis</keyword>
<keyword id="KW-0808">Transferase</keyword>
<sequence>MPTLGVNIDHVATVRQARRTVEPDPIAAAVLAELAGAEGITAHLREDRRHIQDRDVRLLRQTVRTRLNLEMAATDEMVAIALDIRPDYVTLVPERREEVTTEGGLNVVGQRDRLALVVDQLQSAGIPVSLFIDAEPDQIAASAAIQAQWIELHTGRYAEAETEAAQAQELAALRQGCEQAIAAGLRVNAGHGLTYWNVYPVAQLPGMEELNIGHTIISRAVLVGLERAVREMKLAMQGKL</sequence>
<reference key="1">
    <citation type="journal article" date="2007" name="Photosyn. Res.">
        <title>Complete nucleotide sequence of the freshwater unicellular cyanobacterium Synechococcus elongatus PCC 6301 chromosome: gene content and organization.</title>
        <authorList>
            <person name="Sugita C."/>
            <person name="Ogata K."/>
            <person name="Shikata M."/>
            <person name="Jikuya H."/>
            <person name="Takano J."/>
            <person name="Furumichi M."/>
            <person name="Kanehisa M."/>
            <person name="Omata T."/>
            <person name="Sugiura M."/>
            <person name="Sugita M."/>
        </authorList>
    </citation>
    <scope>NUCLEOTIDE SEQUENCE [LARGE SCALE GENOMIC DNA]</scope>
    <source>
        <strain>ATCC 27144 / PCC 6301 / SAUG 1402/1</strain>
    </source>
</reference>